<sequence>MKSVLIFLVAIALFSANIVSADEQTTRGRHTEPDDHHEKPTTQCTHEETTSTQHHHEEVVTTQTPHHEEKTTTEETHHSDDLIVHEGGKTYHVVCHEEGPIHIQEMCNKYIICSKSGSLWYITVMPCSIGTKFDPISRNCVLDN</sequence>
<accession>Q17282</accession>
<name>ALL12_BLOTA</name>
<dbReference type="EMBL" id="U27479">
    <property type="protein sequence ID" value="AAA78904.1"/>
    <property type="molecule type" value="mRNA"/>
</dbReference>
<dbReference type="PDB" id="2MFK">
    <property type="method" value="NMR"/>
    <property type="chains" value="A=81-144"/>
</dbReference>
<dbReference type="PDBsum" id="2MFK"/>
<dbReference type="SMR" id="Q17282"/>
<dbReference type="Allergome" id="149">
    <property type="allergen name" value="Blo t 12"/>
</dbReference>
<dbReference type="Allergome" id="3149">
    <property type="allergen name" value="Blo t 12.0101"/>
</dbReference>
<dbReference type="CAZy" id="CBM14">
    <property type="family name" value="Carbohydrate-Binding Module Family 14"/>
</dbReference>
<dbReference type="EvolutionaryTrace" id="Q17282"/>
<dbReference type="GO" id="GO:0005576">
    <property type="term" value="C:extracellular region"/>
    <property type="evidence" value="ECO:0007669"/>
    <property type="project" value="InterPro"/>
</dbReference>
<dbReference type="GO" id="GO:0008061">
    <property type="term" value="F:chitin binding"/>
    <property type="evidence" value="ECO:0007669"/>
    <property type="project" value="UniProtKB-KW"/>
</dbReference>
<dbReference type="Gene3D" id="2.170.140.10">
    <property type="entry name" value="Chitin binding domain"/>
    <property type="match status" value="1"/>
</dbReference>
<dbReference type="InterPro" id="IPR002557">
    <property type="entry name" value="Chitin-bd_dom"/>
</dbReference>
<dbReference type="InterPro" id="IPR036508">
    <property type="entry name" value="Chitin-bd_dom_sf"/>
</dbReference>
<dbReference type="Pfam" id="PF01607">
    <property type="entry name" value="CBM_14"/>
    <property type="match status" value="1"/>
</dbReference>
<dbReference type="SUPFAM" id="SSF57625">
    <property type="entry name" value="Invertebrate chitin-binding proteins"/>
    <property type="match status" value="1"/>
</dbReference>
<dbReference type="PROSITE" id="PS50940">
    <property type="entry name" value="CHIT_BIND_II"/>
    <property type="match status" value="1"/>
</dbReference>
<reference key="1">
    <citation type="journal article" date="1996" name="J. Allergy Clin. Immunol.">
        <title>Nucleotide sequence analysis of a complementary DNA coding for a Blomia tropicalis allergen.</title>
        <authorList>
            <person name="Puerta L."/>
            <person name="Caraballo L."/>
            <person name="Fernandez-Caldas E."/>
            <person name="Avjioglu A."/>
            <person name="Marsh D.G."/>
            <person name="Lockey R.F."/>
            <person name="Dao M.L."/>
        </authorList>
    </citation>
    <scope>NUCLEOTIDE SEQUENCE [MRNA]</scope>
</reference>
<protein>
    <recommendedName>
        <fullName>Major allergen Blo t 12</fullName>
    </recommendedName>
    <allergenName>Blo t 12</allergenName>
</protein>
<proteinExistence type="evidence at protein level"/>
<comment type="allergen">
    <text>Causes an allergic reaction in human.</text>
</comment>
<evidence type="ECO:0000255" key="1"/>
<evidence type="ECO:0000255" key="2">
    <source>
        <dbReference type="PROSITE-ProRule" id="PRU00144"/>
    </source>
</evidence>
<evidence type="ECO:0000256" key="3">
    <source>
        <dbReference type="SAM" id="MobiDB-lite"/>
    </source>
</evidence>
<evidence type="ECO:0007829" key="4">
    <source>
        <dbReference type="PDB" id="2MFK"/>
    </source>
</evidence>
<feature type="signal peptide" evidence="1">
    <location>
        <begin position="1"/>
        <end position="20"/>
    </location>
</feature>
<feature type="chain" id="PRO_0000020675" description="Major allergen Blo t 12">
    <location>
        <begin position="21"/>
        <end position="144"/>
    </location>
</feature>
<feature type="domain" description="Chitin-binding type-2" evidence="2">
    <location>
        <begin position="92"/>
        <end position="144"/>
    </location>
</feature>
<feature type="region of interest" description="Disordered" evidence="3">
    <location>
        <begin position="24"/>
        <end position="77"/>
    </location>
</feature>
<feature type="disulfide bond" evidence="2">
    <location>
        <begin position="127"/>
        <end position="140"/>
    </location>
</feature>
<feature type="strand" evidence="4">
    <location>
        <begin position="80"/>
        <end position="86"/>
    </location>
</feature>
<feature type="strand" evidence="4">
    <location>
        <begin position="89"/>
        <end position="94"/>
    </location>
</feature>
<feature type="strand" evidence="4">
    <location>
        <begin position="96"/>
        <end position="102"/>
    </location>
</feature>
<feature type="strand" evidence="4">
    <location>
        <begin position="109"/>
        <end position="116"/>
    </location>
</feature>
<feature type="strand" evidence="4">
    <location>
        <begin position="119"/>
        <end position="126"/>
    </location>
</feature>
<feature type="strand" evidence="4">
    <location>
        <begin position="131"/>
        <end position="134"/>
    </location>
</feature>
<feature type="turn" evidence="4">
    <location>
        <begin position="135"/>
        <end position="138"/>
    </location>
</feature>
<feature type="strand" evidence="4">
    <location>
        <begin position="139"/>
        <end position="142"/>
    </location>
</feature>
<keyword id="KW-0002">3D-structure</keyword>
<keyword id="KW-0020">Allergen</keyword>
<keyword id="KW-0147">Chitin-binding</keyword>
<keyword id="KW-1015">Disulfide bond</keyword>
<keyword id="KW-0732">Signal</keyword>
<organism>
    <name type="scientific">Blomia tropicalis</name>
    <name type="common">Mite</name>
    <dbReference type="NCBI Taxonomy" id="40697"/>
    <lineage>
        <taxon>Eukaryota</taxon>
        <taxon>Metazoa</taxon>
        <taxon>Ecdysozoa</taxon>
        <taxon>Arthropoda</taxon>
        <taxon>Chelicerata</taxon>
        <taxon>Arachnida</taxon>
        <taxon>Acari</taxon>
        <taxon>Acariformes</taxon>
        <taxon>Sarcoptiformes</taxon>
        <taxon>Astigmata</taxon>
        <taxon>Glycyphagoidea</taxon>
        <taxon>Echimyopodidae</taxon>
        <taxon>Blomia</taxon>
    </lineage>
</organism>